<feature type="chain" id="PRO_1000198636" description="tRNA-specific 2-thiouridylase MnmA">
    <location>
        <begin position="1"/>
        <end position="370"/>
    </location>
</feature>
<feature type="region of interest" description="Interaction with tRNA" evidence="1">
    <location>
        <begin position="165"/>
        <end position="167"/>
    </location>
</feature>
<feature type="active site" description="Nucleophile" evidence="1">
    <location>
        <position position="119"/>
    </location>
</feature>
<feature type="active site" description="Cysteine persulfide intermediate" evidence="1">
    <location>
        <position position="215"/>
    </location>
</feature>
<feature type="binding site" evidence="1">
    <location>
        <begin position="24"/>
        <end position="31"/>
    </location>
    <ligand>
        <name>ATP</name>
        <dbReference type="ChEBI" id="CHEBI:30616"/>
    </ligand>
</feature>
<feature type="binding site" evidence="1">
    <location>
        <position position="50"/>
    </location>
    <ligand>
        <name>ATP</name>
        <dbReference type="ChEBI" id="CHEBI:30616"/>
    </ligand>
</feature>
<feature type="binding site" evidence="1">
    <location>
        <position position="143"/>
    </location>
    <ligand>
        <name>ATP</name>
        <dbReference type="ChEBI" id="CHEBI:30616"/>
    </ligand>
</feature>
<feature type="site" description="Interaction with tRNA" evidence="1">
    <location>
        <position position="144"/>
    </location>
</feature>
<feature type="site" description="Interaction with tRNA" evidence="1">
    <location>
        <position position="352"/>
    </location>
</feature>
<feature type="disulfide bond" description="Alternate" evidence="1">
    <location>
        <begin position="119"/>
        <end position="215"/>
    </location>
</feature>
<comment type="function">
    <text evidence="1">Catalyzes the 2-thiolation of uridine at the wobble position (U34) of tRNA, leading to the formation of s(2)U34.</text>
</comment>
<comment type="catalytic activity">
    <reaction evidence="1">
        <text>S-sulfanyl-L-cysteinyl-[protein] + uridine(34) in tRNA + AH2 + ATP = 2-thiouridine(34) in tRNA + L-cysteinyl-[protein] + A + AMP + diphosphate + H(+)</text>
        <dbReference type="Rhea" id="RHEA:47032"/>
        <dbReference type="Rhea" id="RHEA-COMP:10131"/>
        <dbReference type="Rhea" id="RHEA-COMP:11726"/>
        <dbReference type="Rhea" id="RHEA-COMP:11727"/>
        <dbReference type="Rhea" id="RHEA-COMP:11728"/>
        <dbReference type="ChEBI" id="CHEBI:13193"/>
        <dbReference type="ChEBI" id="CHEBI:15378"/>
        <dbReference type="ChEBI" id="CHEBI:17499"/>
        <dbReference type="ChEBI" id="CHEBI:29950"/>
        <dbReference type="ChEBI" id="CHEBI:30616"/>
        <dbReference type="ChEBI" id="CHEBI:33019"/>
        <dbReference type="ChEBI" id="CHEBI:61963"/>
        <dbReference type="ChEBI" id="CHEBI:65315"/>
        <dbReference type="ChEBI" id="CHEBI:87170"/>
        <dbReference type="ChEBI" id="CHEBI:456215"/>
        <dbReference type="EC" id="2.8.1.13"/>
    </reaction>
</comment>
<comment type="subcellular location">
    <subcellularLocation>
        <location evidence="1">Cytoplasm</location>
    </subcellularLocation>
</comment>
<comment type="similarity">
    <text evidence="1">Belongs to the MnmA/TRMU family.</text>
</comment>
<protein>
    <recommendedName>
        <fullName evidence="1">tRNA-specific 2-thiouridylase MnmA</fullName>
        <ecNumber evidence="1">2.8.1.13</ecNumber>
    </recommendedName>
</protein>
<proteinExistence type="inferred from homology"/>
<organism>
    <name type="scientific">Wolbachia sp. subsp. Drosophila simulans (strain wRi)</name>
    <dbReference type="NCBI Taxonomy" id="66084"/>
    <lineage>
        <taxon>Bacteria</taxon>
        <taxon>Pseudomonadati</taxon>
        <taxon>Pseudomonadota</taxon>
        <taxon>Alphaproteobacteria</taxon>
        <taxon>Rickettsiales</taxon>
        <taxon>Anaplasmataceae</taxon>
        <taxon>Wolbachieae</taxon>
        <taxon>Wolbachia</taxon>
    </lineage>
</organism>
<sequence length="370" mass="40938">MLKEFEIEPLLKDKAPHQIKAIVAMSGGVDSSVAAALLHNLGYQVIGVTLQLYGTDGNANARKGACCAGQDIYDAKRVAESVGFPHYILNYEEIFKKEVIEDFASTYMRGETPIPCVRCNQTVKFRDLLQVTKNLGADVLVTGHYVRRLEKNGEVKLCRSIDKSKDQSYFLFATTQEQLKLLRFPLGGFYKSDIRKLAKYFSLQISEKPDSQDICFVSESYSKTIAKLAPQSVQKGKIVDVNGKVLGEHSGIVNFTVGQRKGLGIAHNEPLYVIKINTENNEVIVGPINVLMQKKILIKELNWLEQPKEGMEVTVKLRSSHAGSLATIHSTDEKNKACVILNDDYFGISPGQACVAYKGEQVIGGGWICS</sequence>
<dbReference type="EC" id="2.8.1.13" evidence="1"/>
<dbReference type="EMBL" id="CP001391">
    <property type="protein sequence ID" value="ACN95917.1"/>
    <property type="molecule type" value="Genomic_DNA"/>
</dbReference>
<dbReference type="RefSeq" id="WP_007548792.1">
    <property type="nucleotide sequence ID" value="NC_012416.1"/>
</dbReference>
<dbReference type="SMR" id="C0R4S5"/>
<dbReference type="STRING" id="66084.WRi_012330"/>
<dbReference type="KEGG" id="wri:WRi_012330"/>
<dbReference type="HOGENOM" id="CLU_035188_0_1_5"/>
<dbReference type="Proteomes" id="UP000001293">
    <property type="component" value="Chromosome"/>
</dbReference>
<dbReference type="GO" id="GO:0005737">
    <property type="term" value="C:cytoplasm"/>
    <property type="evidence" value="ECO:0007669"/>
    <property type="project" value="UniProtKB-SubCell"/>
</dbReference>
<dbReference type="GO" id="GO:0005524">
    <property type="term" value="F:ATP binding"/>
    <property type="evidence" value="ECO:0007669"/>
    <property type="project" value="UniProtKB-KW"/>
</dbReference>
<dbReference type="GO" id="GO:0000049">
    <property type="term" value="F:tRNA binding"/>
    <property type="evidence" value="ECO:0007669"/>
    <property type="project" value="UniProtKB-KW"/>
</dbReference>
<dbReference type="GO" id="GO:0103016">
    <property type="term" value="F:tRNA-uridine 2-sulfurtransferase activity"/>
    <property type="evidence" value="ECO:0007669"/>
    <property type="project" value="UniProtKB-EC"/>
</dbReference>
<dbReference type="GO" id="GO:0002143">
    <property type="term" value="P:tRNA wobble position uridine thiolation"/>
    <property type="evidence" value="ECO:0007669"/>
    <property type="project" value="TreeGrafter"/>
</dbReference>
<dbReference type="CDD" id="cd01998">
    <property type="entry name" value="MnmA_TRMU-like"/>
    <property type="match status" value="1"/>
</dbReference>
<dbReference type="FunFam" id="2.30.30.280:FF:000001">
    <property type="entry name" value="tRNA-specific 2-thiouridylase MnmA"/>
    <property type="match status" value="1"/>
</dbReference>
<dbReference type="FunFam" id="3.40.50.620:FF:000115">
    <property type="entry name" value="tRNA-specific 2-thiouridylase MnmA"/>
    <property type="match status" value="1"/>
</dbReference>
<dbReference type="Gene3D" id="2.30.30.280">
    <property type="entry name" value="Adenine nucleotide alpha hydrolases-like domains"/>
    <property type="match status" value="1"/>
</dbReference>
<dbReference type="Gene3D" id="3.40.50.620">
    <property type="entry name" value="HUPs"/>
    <property type="match status" value="1"/>
</dbReference>
<dbReference type="Gene3D" id="2.40.30.10">
    <property type="entry name" value="Translation factors"/>
    <property type="match status" value="1"/>
</dbReference>
<dbReference type="HAMAP" id="MF_00144">
    <property type="entry name" value="tRNA_thiouridyl_MnmA"/>
    <property type="match status" value="1"/>
</dbReference>
<dbReference type="InterPro" id="IPR004506">
    <property type="entry name" value="MnmA-like"/>
</dbReference>
<dbReference type="InterPro" id="IPR046885">
    <property type="entry name" value="MnmA-like_C"/>
</dbReference>
<dbReference type="InterPro" id="IPR046884">
    <property type="entry name" value="MnmA-like_central"/>
</dbReference>
<dbReference type="InterPro" id="IPR023382">
    <property type="entry name" value="MnmA-like_central_sf"/>
</dbReference>
<dbReference type="InterPro" id="IPR014729">
    <property type="entry name" value="Rossmann-like_a/b/a_fold"/>
</dbReference>
<dbReference type="NCBIfam" id="NF001138">
    <property type="entry name" value="PRK00143.1"/>
    <property type="match status" value="1"/>
</dbReference>
<dbReference type="NCBIfam" id="TIGR00420">
    <property type="entry name" value="trmU"/>
    <property type="match status" value="1"/>
</dbReference>
<dbReference type="PANTHER" id="PTHR11933:SF5">
    <property type="entry name" value="MITOCHONDRIAL TRNA-SPECIFIC 2-THIOURIDYLASE 1"/>
    <property type="match status" value="1"/>
</dbReference>
<dbReference type="PANTHER" id="PTHR11933">
    <property type="entry name" value="TRNA 5-METHYLAMINOMETHYL-2-THIOURIDYLATE -METHYLTRANSFERASE"/>
    <property type="match status" value="1"/>
</dbReference>
<dbReference type="Pfam" id="PF03054">
    <property type="entry name" value="tRNA_Me_trans"/>
    <property type="match status" value="1"/>
</dbReference>
<dbReference type="Pfam" id="PF20258">
    <property type="entry name" value="tRNA_Me_trans_C"/>
    <property type="match status" value="1"/>
</dbReference>
<dbReference type="Pfam" id="PF20259">
    <property type="entry name" value="tRNA_Me_trans_M"/>
    <property type="match status" value="1"/>
</dbReference>
<dbReference type="SUPFAM" id="SSF52402">
    <property type="entry name" value="Adenine nucleotide alpha hydrolases-like"/>
    <property type="match status" value="1"/>
</dbReference>
<accession>C0R4S5</accession>
<gene>
    <name evidence="1" type="primary">mnmA</name>
    <name type="ordered locus">WRi_012330</name>
</gene>
<reference key="1">
    <citation type="journal article" date="2009" name="Proc. Natl. Acad. Sci. U.S.A.">
        <title>The mosaic genome structure of the Wolbachia wRi strain infecting Drosophila simulans.</title>
        <authorList>
            <person name="Klasson L."/>
            <person name="Westberg J."/>
            <person name="Sapountzis P."/>
            <person name="Naeslund K."/>
            <person name="Lutnaes Y."/>
            <person name="Darby A.C."/>
            <person name="Veneti Z."/>
            <person name="Chen L."/>
            <person name="Braig H.R."/>
            <person name="Garrett R."/>
            <person name="Bourtzis K."/>
            <person name="Andersson S.G."/>
        </authorList>
    </citation>
    <scope>NUCLEOTIDE SEQUENCE [LARGE SCALE GENOMIC DNA]</scope>
    <source>
        <strain>wRi</strain>
    </source>
</reference>
<name>MNMA_WOLWR</name>
<keyword id="KW-0067">ATP-binding</keyword>
<keyword id="KW-0963">Cytoplasm</keyword>
<keyword id="KW-1015">Disulfide bond</keyword>
<keyword id="KW-0547">Nucleotide-binding</keyword>
<keyword id="KW-0694">RNA-binding</keyword>
<keyword id="KW-0808">Transferase</keyword>
<keyword id="KW-0819">tRNA processing</keyword>
<keyword id="KW-0820">tRNA-binding</keyword>
<evidence type="ECO:0000255" key="1">
    <source>
        <dbReference type="HAMAP-Rule" id="MF_00144"/>
    </source>
</evidence>